<evidence type="ECO:0000250" key="1">
    <source>
        <dbReference type="UniProtKB" id="P47032"/>
    </source>
</evidence>
<evidence type="ECO:0000255" key="2"/>
<evidence type="ECO:0000255" key="3">
    <source>
        <dbReference type="PROSITE-ProRule" id="PRU00498"/>
    </source>
</evidence>
<evidence type="ECO:0000256" key="4">
    <source>
        <dbReference type="SAM" id="MobiDB-lite"/>
    </source>
</evidence>
<evidence type="ECO:0000305" key="5"/>
<gene>
    <name type="ORF">ARB_02861</name>
</gene>
<sequence length="309" mass="32027">MKSSVLMTALCVAGSLAAEQISPPNEVVVTAKKVVVVTTTVTTTIPCPTVIPTTSYKPEPTSKPPVIPPVPTSSAEPLPPPPVEPSTIPCPEPGTSTYAPPPPPPPPTSAPAPPAPPPPPPSSAPAPPAPPPSQPSQGPAPPPPPPGKDYKEVAGYHHNVHRSNHSAPALTWSSALESSARKLAESCNYGHDTSIDGGGYGQNIGYQSGYNNVAALLTEQMYNEEAILFEGNYGNNNPSNFHSWGHFTQMVWIGTTHVGCFTAHCSNLGGQGSGGDAYYTVCNYSPPGNVLGQYAENVKPPKGQPVVTV</sequence>
<accession>D4B327</accession>
<name>PRY1_ARTBC</name>
<proteinExistence type="inferred from homology"/>
<reference key="1">
    <citation type="journal article" date="2011" name="Genome Biol.">
        <title>Comparative and functional genomics provide insights into the pathogenicity of dermatophytic fungi.</title>
        <authorList>
            <person name="Burmester A."/>
            <person name="Shelest E."/>
            <person name="Gloeckner G."/>
            <person name="Heddergott C."/>
            <person name="Schindler S."/>
            <person name="Staib P."/>
            <person name="Heidel A."/>
            <person name="Felder M."/>
            <person name="Petzold A."/>
            <person name="Szafranski K."/>
            <person name="Feuermann M."/>
            <person name="Pedruzzi I."/>
            <person name="Priebe S."/>
            <person name="Groth M."/>
            <person name="Winkler R."/>
            <person name="Li W."/>
            <person name="Kniemeyer O."/>
            <person name="Schroeckh V."/>
            <person name="Hertweck C."/>
            <person name="Hube B."/>
            <person name="White T.C."/>
            <person name="Platzer M."/>
            <person name="Guthke R."/>
            <person name="Heitman J."/>
            <person name="Woestemeyer J."/>
            <person name="Zipfel P.F."/>
            <person name="Monod M."/>
            <person name="Brakhage A.A."/>
        </authorList>
    </citation>
    <scope>NUCLEOTIDE SEQUENCE [LARGE SCALE GENOMIC DNA]</scope>
    <source>
        <strain>ATCC MYA-4681 / CBS 112371</strain>
    </source>
</reference>
<dbReference type="EMBL" id="ABSU01000031">
    <property type="protein sequence ID" value="EFE30323.1"/>
    <property type="status" value="ALT_SEQ"/>
    <property type="molecule type" value="Genomic_DNA"/>
</dbReference>
<dbReference type="RefSeq" id="XP_003010963.1">
    <property type="nucleotide sequence ID" value="XM_003010917.1"/>
</dbReference>
<dbReference type="SMR" id="D4B327"/>
<dbReference type="GeneID" id="9525080"/>
<dbReference type="KEGG" id="abe:ARB_02861"/>
<dbReference type="eggNOG" id="KOG3017">
    <property type="taxonomic scope" value="Eukaryota"/>
</dbReference>
<dbReference type="HOGENOM" id="CLU_035730_5_0_1"/>
<dbReference type="OrthoDB" id="337038at2759"/>
<dbReference type="Proteomes" id="UP000008866">
    <property type="component" value="Unassembled WGS sequence"/>
</dbReference>
<dbReference type="GO" id="GO:0005576">
    <property type="term" value="C:extracellular region"/>
    <property type="evidence" value="ECO:0007669"/>
    <property type="project" value="UniProtKB-SubCell"/>
</dbReference>
<dbReference type="GO" id="GO:0008289">
    <property type="term" value="F:lipid binding"/>
    <property type="evidence" value="ECO:0007669"/>
    <property type="project" value="UniProtKB-KW"/>
</dbReference>
<dbReference type="GO" id="GO:0006869">
    <property type="term" value="P:lipid transport"/>
    <property type="evidence" value="ECO:0007669"/>
    <property type="project" value="UniProtKB-KW"/>
</dbReference>
<dbReference type="CDD" id="cd05380">
    <property type="entry name" value="CAP_euk"/>
    <property type="match status" value="1"/>
</dbReference>
<dbReference type="FunFam" id="3.40.33.10:FF:000018">
    <property type="entry name" value="SCP-like extracellular protein, putative"/>
    <property type="match status" value="1"/>
</dbReference>
<dbReference type="Gene3D" id="3.40.33.10">
    <property type="entry name" value="CAP"/>
    <property type="match status" value="1"/>
</dbReference>
<dbReference type="InterPro" id="IPR018244">
    <property type="entry name" value="Allrgn_V5/Tpx1_CS"/>
</dbReference>
<dbReference type="InterPro" id="IPR014044">
    <property type="entry name" value="CAP_dom"/>
</dbReference>
<dbReference type="InterPro" id="IPR035940">
    <property type="entry name" value="CAP_sf"/>
</dbReference>
<dbReference type="InterPro" id="IPR001283">
    <property type="entry name" value="CRISP-related"/>
</dbReference>
<dbReference type="PANTHER" id="PTHR10334">
    <property type="entry name" value="CYSTEINE-RICH SECRETORY PROTEIN-RELATED"/>
    <property type="match status" value="1"/>
</dbReference>
<dbReference type="Pfam" id="PF00188">
    <property type="entry name" value="CAP"/>
    <property type="match status" value="1"/>
</dbReference>
<dbReference type="PRINTS" id="PR00837">
    <property type="entry name" value="V5TPXLIKE"/>
</dbReference>
<dbReference type="SMART" id="SM00198">
    <property type="entry name" value="SCP"/>
    <property type="match status" value="1"/>
</dbReference>
<dbReference type="SUPFAM" id="SSF55797">
    <property type="entry name" value="PR-1-like"/>
    <property type="match status" value="1"/>
</dbReference>
<dbReference type="PROSITE" id="PS01009">
    <property type="entry name" value="CRISP_1"/>
    <property type="match status" value="1"/>
</dbReference>
<comment type="function">
    <text evidence="1">Secreted protein required for efficient export of lipids such as acetylated sterols. Acts in detoxification of hydrophobic compounds.</text>
</comment>
<comment type="subcellular location">
    <subcellularLocation>
        <location evidence="1">Secreted</location>
    </subcellularLocation>
</comment>
<comment type="domain">
    <text evidence="1">The SCP domain is necessary and sufficient for lipid export and sterol-binding.</text>
</comment>
<comment type="allergen">
    <text evidence="5">May cause an allergic reaction in human.</text>
</comment>
<comment type="similarity">
    <text evidence="5">Belongs to the CRISP family.</text>
</comment>
<comment type="sequence caution" evidence="5">
    <conflict type="erroneous gene model prediction">
        <sequence resource="EMBL-CDS" id="EFE30323"/>
    </conflict>
</comment>
<keyword id="KW-0020">Allergen</keyword>
<keyword id="KW-0325">Glycoprotein</keyword>
<keyword id="KW-0445">Lipid transport</keyword>
<keyword id="KW-0446">Lipid-binding</keyword>
<keyword id="KW-1185">Reference proteome</keyword>
<keyword id="KW-0964">Secreted</keyword>
<keyword id="KW-0732">Signal</keyword>
<keyword id="KW-0813">Transport</keyword>
<protein>
    <recommendedName>
        <fullName evidence="5">Probable pathogenesis-related protein ARB_02861</fullName>
    </recommendedName>
    <alternativeName>
        <fullName evidence="5">Wasp ves v 5 allergen homolog</fullName>
    </alternativeName>
</protein>
<organism>
    <name type="scientific">Arthroderma benhamiae (strain ATCC MYA-4681 / CBS 112371)</name>
    <name type="common">Trichophyton mentagrophytes</name>
    <dbReference type="NCBI Taxonomy" id="663331"/>
    <lineage>
        <taxon>Eukaryota</taxon>
        <taxon>Fungi</taxon>
        <taxon>Dikarya</taxon>
        <taxon>Ascomycota</taxon>
        <taxon>Pezizomycotina</taxon>
        <taxon>Eurotiomycetes</taxon>
        <taxon>Eurotiomycetidae</taxon>
        <taxon>Onygenales</taxon>
        <taxon>Arthrodermataceae</taxon>
        <taxon>Trichophyton</taxon>
    </lineage>
</organism>
<feature type="signal peptide" evidence="2">
    <location>
        <begin position="1"/>
        <end position="17"/>
    </location>
</feature>
<feature type="chain" id="PRO_0000434918" description="Probable pathogenesis-related protein ARB_02861">
    <location>
        <begin position="18"/>
        <end position="309"/>
    </location>
</feature>
<feature type="domain" description="SCP" evidence="1">
    <location>
        <begin position="154"/>
        <end position="284"/>
    </location>
</feature>
<feature type="region of interest" description="Disordered" evidence="4">
    <location>
        <begin position="47"/>
        <end position="152"/>
    </location>
</feature>
<feature type="compositionally biased region" description="Low complexity" evidence="4">
    <location>
        <begin position="47"/>
        <end position="59"/>
    </location>
</feature>
<feature type="compositionally biased region" description="Pro residues" evidence="4">
    <location>
        <begin position="61"/>
        <end position="92"/>
    </location>
</feature>
<feature type="compositionally biased region" description="Pro residues" evidence="4">
    <location>
        <begin position="99"/>
        <end position="147"/>
    </location>
</feature>
<feature type="glycosylation site" description="N-linked (GlcNAc...) asparagine" evidence="3">
    <location>
        <position position="164"/>
    </location>
</feature>